<reference key="1">
    <citation type="journal article" date="2005" name="Infect. Immun.">
        <title>Whole-genome analyses of speciation events in pathogenic Brucellae.</title>
        <authorList>
            <person name="Chain P.S."/>
            <person name="Comerci D.J."/>
            <person name="Tolmasky M.E."/>
            <person name="Larimer F.W."/>
            <person name="Malfatti S.A."/>
            <person name="Vergez L.M."/>
            <person name="Aguero F."/>
            <person name="Land M.L."/>
            <person name="Ugalde R.A."/>
            <person name="Garcia E."/>
        </authorList>
    </citation>
    <scope>NUCLEOTIDE SEQUENCE [LARGE SCALE GENOMIC DNA]</scope>
    <source>
        <strain>2308</strain>
    </source>
</reference>
<proteinExistence type="inferred from homology"/>
<sequence>MIETLLPASALAFPAIDPVIFRVGPLAVHWYGLGYVVGILFAWWYGKKLLRSHRLWANNQPPMAPEALDDFVIWAALGVVLGGRIGYVLFYNFSYYISNPLAIPALWDGGMSFHGGILGTTLAMILFARSRGILVWSMFDTIAAGVPIGLGVVRVANFINSELWGRVSDVPWAVYFPNGGPLPRHPSQLYEAFLEGLVLFFVLFVLVWGARKLKQPGFVAGAFVTGYGLSRIAVEFFREPDAQIGYLFGGWLTMGMVLSVPMVLLGLWAMWRANRAAARNA</sequence>
<keyword id="KW-0997">Cell inner membrane</keyword>
<keyword id="KW-1003">Cell membrane</keyword>
<keyword id="KW-0472">Membrane</keyword>
<keyword id="KW-1185">Reference proteome</keyword>
<keyword id="KW-0808">Transferase</keyword>
<keyword id="KW-0812">Transmembrane</keyword>
<keyword id="KW-1133">Transmembrane helix</keyword>
<comment type="function">
    <text evidence="1">Catalyzes the transfer of the diacylglyceryl group from phosphatidylglycerol to the sulfhydryl group of the N-terminal cysteine of a prolipoprotein, the first step in the formation of mature lipoproteins.</text>
</comment>
<comment type="catalytic activity">
    <reaction evidence="1">
        <text>L-cysteinyl-[prolipoprotein] + a 1,2-diacyl-sn-glycero-3-phospho-(1'-sn-glycerol) = an S-1,2-diacyl-sn-glyceryl-L-cysteinyl-[prolipoprotein] + sn-glycerol 1-phosphate + H(+)</text>
        <dbReference type="Rhea" id="RHEA:56712"/>
        <dbReference type="Rhea" id="RHEA-COMP:14679"/>
        <dbReference type="Rhea" id="RHEA-COMP:14680"/>
        <dbReference type="ChEBI" id="CHEBI:15378"/>
        <dbReference type="ChEBI" id="CHEBI:29950"/>
        <dbReference type="ChEBI" id="CHEBI:57685"/>
        <dbReference type="ChEBI" id="CHEBI:64716"/>
        <dbReference type="ChEBI" id="CHEBI:140658"/>
        <dbReference type="EC" id="2.5.1.145"/>
    </reaction>
</comment>
<comment type="pathway">
    <text evidence="1">Protein modification; lipoprotein biosynthesis (diacylglyceryl transfer).</text>
</comment>
<comment type="subcellular location">
    <subcellularLocation>
        <location evidence="1">Cell inner membrane</location>
        <topology evidence="1">Multi-pass membrane protein</topology>
    </subcellularLocation>
</comment>
<comment type="similarity">
    <text evidence="1">Belongs to the Lgt family.</text>
</comment>
<feature type="chain" id="PRO_1000053393" description="Phosphatidylglycerol--prolipoprotein diacylglyceryl transferase">
    <location>
        <begin position="1"/>
        <end position="281"/>
    </location>
</feature>
<feature type="transmembrane region" description="Helical" evidence="1">
    <location>
        <begin position="23"/>
        <end position="43"/>
    </location>
</feature>
<feature type="transmembrane region" description="Helical" evidence="1">
    <location>
        <begin position="71"/>
        <end position="91"/>
    </location>
</feature>
<feature type="transmembrane region" description="Helical" evidence="1">
    <location>
        <begin position="107"/>
        <end position="127"/>
    </location>
</feature>
<feature type="transmembrane region" description="Helical" evidence="1">
    <location>
        <begin position="133"/>
        <end position="153"/>
    </location>
</feature>
<feature type="transmembrane region" description="Helical" evidence="1">
    <location>
        <begin position="189"/>
        <end position="209"/>
    </location>
</feature>
<feature type="transmembrane region" description="Helical" evidence="1">
    <location>
        <begin position="217"/>
        <end position="237"/>
    </location>
</feature>
<feature type="transmembrane region" description="Helical" evidence="1">
    <location>
        <begin position="247"/>
        <end position="267"/>
    </location>
</feature>
<feature type="binding site" evidence="1">
    <location>
        <position position="154"/>
    </location>
    <ligand>
        <name>a 1,2-diacyl-sn-glycero-3-phospho-(1'-sn-glycerol)</name>
        <dbReference type="ChEBI" id="CHEBI:64716"/>
    </ligand>
</feature>
<protein>
    <recommendedName>
        <fullName evidence="1">Phosphatidylglycerol--prolipoprotein diacylglyceryl transferase</fullName>
        <ecNumber evidence="1">2.5.1.145</ecNumber>
    </recommendedName>
</protein>
<organism>
    <name type="scientific">Brucella abortus (strain 2308)</name>
    <dbReference type="NCBI Taxonomy" id="359391"/>
    <lineage>
        <taxon>Bacteria</taxon>
        <taxon>Pseudomonadati</taxon>
        <taxon>Pseudomonadota</taxon>
        <taxon>Alphaproteobacteria</taxon>
        <taxon>Hyphomicrobiales</taxon>
        <taxon>Brucellaceae</taxon>
        <taxon>Brucella/Ochrobactrum group</taxon>
        <taxon>Brucella</taxon>
    </lineage>
</organism>
<evidence type="ECO:0000255" key="1">
    <source>
        <dbReference type="HAMAP-Rule" id="MF_01147"/>
    </source>
</evidence>
<name>LGT_BRUA2</name>
<accession>Q2YLY3</accession>
<dbReference type="EC" id="2.5.1.145" evidence="1"/>
<dbReference type="EMBL" id="AM040264">
    <property type="protein sequence ID" value="CAJ11500.1"/>
    <property type="molecule type" value="Genomic_DNA"/>
</dbReference>
<dbReference type="RefSeq" id="WP_002966912.1">
    <property type="nucleotide sequence ID" value="NZ_KN046823.1"/>
</dbReference>
<dbReference type="SMR" id="Q2YLY3"/>
<dbReference type="STRING" id="359391.BAB1_1544"/>
<dbReference type="GeneID" id="97533286"/>
<dbReference type="KEGG" id="bmf:BAB1_1544"/>
<dbReference type="PATRIC" id="fig|359391.11.peg.993"/>
<dbReference type="HOGENOM" id="CLU_013386_1_0_5"/>
<dbReference type="PhylomeDB" id="Q2YLY3"/>
<dbReference type="UniPathway" id="UPA00664"/>
<dbReference type="Proteomes" id="UP000002719">
    <property type="component" value="Chromosome I"/>
</dbReference>
<dbReference type="GO" id="GO:0005886">
    <property type="term" value="C:plasma membrane"/>
    <property type="evidence" value="ECO:0007669"/>
    <property type="project" value="UniProtKB-SubCell"/>
</dbReference>
<dbReference type="GO" id="GO:0008961">
    <property type="term" value="F:phosphatidylglycerol-prolipoprotein diacylglyceryl transferase activity"/>
    <property type="evidence" value="ECO:0007669"/>
    <property type="project" value="UniProtKB-UniRule"/>
</dbReference>
<dbReference type="GO" id="GO:0042158">
    <property type="term" value="P:lipoprotein biosynthetic process"/>
    <property type="evidence" value="ECO:0007669"/>
    <property type="project" value="UniProtKB-UniRule"/>
</dbReference>
<dbReference type="HAMAP" id="MF_01147">
    <property type="entry name" value="Lgt"/>
    <property type="match status" value="1"/>
</dbReference>
<dbReference type="InterPro" id="IPR001640">
    <property type="entry name" value="Lgt"/>
</dbReference>
<dbReference type="NCBIfam" id="TIGR00544">
    <property type="entry name" value="lgt"/>
    <property type="match status" value="1"/>
</dbReference>
<dbReference type="PANTHER" id="PTHR30589:SF0">
    <property type="entry name" value="PHOSPHATIDYLGLYCEROL--PROLIPOPROTEIN DIACYLGLYCERYL TRANSFERASE"/>
    <property type="match status" value="1"/>
</dbReference>
<dbReference type="PANTHER" id="PTHR30589">
    <property type="entry name" value="PROLIPOPROTEIN DIACYLGLYCERYL TRANSFERASE"/>
    <property type="match status" value="1"/>
</dbReference>
<dbReference type="Pfam" id="PF01790">
    <property type="entry name" value="LGT"/>
    <property type="match status" value="1"/>
</dbReference>
<gene>
    <name evidence="1" type="primary">lgt</name>
    <name type="ordered locus">BAB1_1544</name>
</gene>